<sequence length="94" mass="9940">MLKPLGDRVVLKIEEKEQTVGGFVLAGSAQEKTKTAQVVATGQGVRTLNGDLVAPSVKTGDRVLVEAHAGLDVKDGDEKYIIVGEVNILAIIEE</sequence>
<name>CH10_STRP7</name>
<keyword id="KW-0143">Chaperone</keyword>
<keyword id="KW-0963">Cytoplasm</keyword>
<organism>
    <name type="scientific">Streptococcus pneumoniae (strain 70585)</name>
    <dbReference type="NCBI Taxonomy" id="488221"/>
    <lineage>
        <taxon>Bacteria</taxon>
        <taxon>Bacillati</taxon>
        <taxon>Bacillota</taxon>
        <taxon>Bacilli</taxon>
        <taxon>Lactobacillales</taxon>
        <taxon>Streptococcaceae</taxon>
        <taxon>Streptococcus</taxon>
    </lineage>
</organism>
<comment type="function">
    <text evidence="1">Together with the chaperonin GroEL, plays an essential role in assisting protein folding. The GroEL-GroES system forms a nano-cage that allows encapsulation of the non-native substrate proteins and provides a physical environment optimized to promote and accelerate protein folding. GroES binds to the apical surface of the GroEL ring, thereby capping the opening of the GroEL channel.</text>
</comment>
<comment type="subunit">
    <text evidence="1">Heptamer of 7 subunits arranged in a ring. Interacts with the chaperonin GroEL.</text>
</comment>
<comment type="subcellular location">
    <subcellularLocation>
        <location evidence="1">Cytoplasm</location>
    </subcellularLocation>
</comment>
<comment type="similarity">
    <text evidence="1">Belongs to the GroES chaperonin family.</text>
</comment>
<feature type="chain" id="PRO_1000146918" description="Co-chaperonin GroES">
    <location>
        <begin position="1"/>
        <end position="94"/>
    </location>
</feature>
<dbReference type="EMBL" id="CP000918">
    <property type="protein sequence ID" value="ACO17564.1"/>
    <property type="molecule type" value="Genomic_DNA"/>
</dbReference>
<dbReference type="RefSeq" id="WP_000917331.1">
    <property type="nucleotide sequence ID" value="NC_012468.1"/>
</dbReference>
<dbReference type="SMR" id="C1C9H7"/>
<dbReference type="KEGG" id="snm:SP70585_1988"/>
<dbReference type="HOGENOM" id="CLU_132825_1_2_9"/>
<dbReference type="Proteomes" id="UP000002211">
    <property type="component" value="Chromosome"/>
</dbReference>
<dbReference type="GO" id="GO:0005737">
    <property type="term" value="C:cytoplasm"/>
    <property type="evidence" value="ECO:0007669"/>
    <property type="project" value="UniProtKB-SubCell"/>
</dbReference>
<dbReference type="GO" id="GO:0005524">
    <property type="term" value="F:ATP binding"/>
    <property type="evidence" value="ECO:0007669"/>
    <property type="project" value="InterPro"/>
</dbReference>
<dbReference type="GO" id="GO:0046872">
    <property type="term" value="F:metal ion binding"/>
    <property type="evidence" value="ECO:0007669"/>
    <property type="project" value="TreeGrafter"/>
</dbReference>
<dbReference type="GO" id="GO:0044183">
    <property type="term" value="F:protein folding chaperone"/>
    <property type="evidence" value="ECO:0007669"/>
    <property type="project" value="InterPro"/>
</dbReference>
<dbReference type="GO" id="GO:0051087">
    <property type="term" value="F:protein-folding chaperone binding"/>
    <property type="evidence" value="ECO:0007669"/>
    <property type="project" value="TreeGrafter"/>
</dbReference>
<dbReference type="GO" id="GO:0051082">
    <property type="term" value="F:unfolded protein binding"/>
    <property type="evidence" value="ECO:0007669"/>
    <property type="project" value="TreeGrafter"/>
</dbReference>
<dbReference type="GO" id="GO:0051085">
    <property type="term" value="P:chaperone cofactor-dependent protein refolding"/>
    <property type="evidence" value="ECO:0007669"/>
    <property type="project" value="TreeGrafter"/>
</dbReference>
<dbReference type="CDD" id="cd00320">
    <property type="entry name" value="cpn10"/>
    <property type="match status" value="1"/>
</dbReference>
<dbReference type="FunFam" id="2.30.33.40:FF:000007">
    <property type="entry name" value="10 kDa chaperonin"/>
    <property type="match status" value="1"/>
</dbReference>
<dbReference type="Gene3D" id="2.30.33.40">
    <property type="entry name" value="GroES chaperonin"/>
    <property type="match status" value="1"/>
</dbReference>
<dbReference type="HAMAP" id="MF_00580">
    <property type="entry name" value="CH10"/>
    <property type="match status" value="1"/>
</dbReference>
<dbReference type="InterPro" id="IPR020818">
    <property type="entry name" value="Chaperonin_GroES"/>
</dbReference>
<dbReference type="InterPro" id="IPR037124">
    <property type="entry name" value="Chaperonin_GroES_sf"/>
</dbReference>
<dbReference type="InterPro" id="IPR018369">
    <property type="entry name" value="Chaprnonin_Cpn10_CS"/>
</dbReference>
<dbReference type="InterPro" id="IPR011032">
    <property type="entry name" value="GroES-like_sf"/>
</dbReference>
<dbReference type="NCBIfam" id="NF001528">
    <property type="entry name" value="PRK00364.1-4"/>
    <property type="match status" value="1"/>
</dbReference>
<dbReference type="PANTHER" id="PTHR10772">
    <property type="entry name" value="10 KDA HEAT SHOCK PROTEIN"/>
    <property type="match status" value="1"/>
</dbReference>
<dbReference type="PANTHER" id="PTHR10772:SF58">
    <property type="entry name" value="CO-CHAPERONIN GROES"/>
    <property type="match status" value="1"/>
</dbReference>
<dbReference type="Pfam" id="PF00166">
    <property type="entry name" value="Cpn10"/>
    <property type="match status" value="1"/>
</dbReference>
<dbReference type="PRINTS" id="PR00297">
    <property type="entry name" value="CHAPERONIN10"/>
</dbReference>
<dbReference type="SMART" id="SM00883">
    <property type="entry name" value="Cpn10"/>
    <property type="match status" value="1"/>
</dbReference>
<dbReference type="SUPFAM" id="SSF50129">
    <property type="entry name" value="GroES-like"/>
    <property type="match status" value="1"/>
</dbReference>
<dbReference type="PROSITE" id="PS00681">
    <property type="entry name" value="CHAPERONINS_CPN10"/>
    <property type="match status" value="1"/>
</dbReference>
<accession>C1C9H7</accession>
<protein>
    <recommendedName>
        <fullName evidence="1">Co-chaperonin GroES</fullName>
    </recommendedName>
    <alternativeName>
        <fullName evidence="1">10 kDa chaperonin</fullName>
    </alternativeName>
    <alternativeName>
        <fullName evidence="1">Chaperonin-10</fullName>
        <shortName evidence="1">Cpn10</shortName>
    </alternativeName>
</protein>
<evidence type="ECO:0000255" key="1">
    <source>
        <dbReference type="HAMAP-Rule" id="MF_00580"/>
    </source>
</evidence>
<proteinExistence type="inferred from homology"/>
<reference key="1">
    <citation type="journal article" date="2010" name="Genome Biol.">
        <title>Structure and dynamics of the pan-genome of Streptococcus pneumoniae and closely related species.</title>
        <authorList>
            <person name="Donati C."/>
            <person name="Hiller N.L."/>
            <person name="Tettelin H."/>
            <person name="Muzzi A."/>
            <person name="Croucher N.J."/>
            <person name="Angiuoli S.V."/>
            <person name="Oggioni M."/>
            <person name="Dunning Hotopp J.C."/>
            <person name="Hu F.Z."/>
            <person name="Riley D.R."/>
            <person name="Covacci A."/>
            <person name="Mitchell T.J."/>
            <person name="Bentley S.D."/>
            <person name="Kilian M."/>
            <person name="Ehrlich G.D."/>
            <person name="Rappuoli R."/>
            <person name="Moxon E.R."/>
            <person name="Masignani V."/>
        </authorList>
    </citation>
    <scope>NUCLEOTIDE SEQUENCE [LARGE SCALE GENOMIC DNA]</scope>
    <source>
        <strain>70585</strain>
    </source>
</reference>
<gene>
    <name evidence="1" type="primary">groES</name>
    <name evidence="1" type="synonym">groS</name>
    <name type="ordered locus">SP70585_1988</name>
</gene>